<reference key="1">
    <citation type="journal article" date="2008" name="J. Bacteriol.">
        <title>Comparative genome sequence analysis of multidrug-resistant Acinetobacter baumannii.</title>
        <authorList>
            <person name="Adams M.D."/>
            <person name="Goglin K."/>
            <person name="Molyneaux N."/>
            <person name="Hujer K.M."/>
            <person name="Lavender H."/>
            <person name="Jamison J.J."/>
            <person name="MacDonald I.J."/>
            <person name="Martin K.M."/>
            <person name="Russo T."/>
            <person name="Campagnari A.A."/>
            <person name="Hujer A.M."/>
            <person name="Bonomo R.A."/>
            <person name="Gill S.R."/>
        </authorList>
    </citation>
    <scope>NUCLEOTIDE SEQUENCE [LARGE SCALE GENOMIC DNA]</scope>
    <source>
        <strain>AB0057</strain>
    </source>
</reference>
<keyword id="KW-0066">ATP synthesis</keyword>
<keyword id="KW-0997">Cell inner membrane</keyword>
<keyword id="KW-1003">Cell membrane</keyword>
<keyword id="KW-0139">CF(1)</keyword>
<keyword id="KW-0375">Hydrogen ion transport</keyword>
<keyword id="KW-0406">Ion transport</keyword>
<keyword id="KW-0472">Membrane</keyword>
<keyword id="KW-0813">Transport</keyword>
<protein>
    <recommendedName>
        <fullName evidence="1">ATP synthase epsilon chain</fullName>
    </recommendedName>
    <alternativeName>
        <fullName evidence="1">ATP synthase F1 sector epsilon subunit</fullName>
    </alternativeName>
    <alternativeName>
        <fullName evidence="1">F-ATPase epsilon subunit</fullName>
    </alternativeName>
</protein>
<accession>B7I1W5</accession>
<sequence length="139" mass="14539">MATMQCDVVSVKESIYSGAVTMLIAKGAGGELGILPGHAPLVTLLQPGPIRVLLENGTEEIVYVSGGVLEVQPHVVTVLADTAIRADNLDEAAILEARKNAEQLLANQKSDLDSAAALAALAETAAQLETIRKIKNRAQ</sequence>
<name>ATPE_ACIB5</name>
<organism>
    <name type="scientific">Acinetobacter baumannii (strain AB0057)</name>
    <dbReference type="NCBI Taxonomy" id="480119"/>
    <lineage>
        <taxon>Bacteria</taxon>
        <taxon>Pseudomonadati</taxon>
        <taxon>Pseudomonadota</taxon>
        <taxon>Gammaproteobacteria</taxon>
        <taxon>Moraxellales</taxon>
        <taxon>Moraxellaceae</taxon>
        <taxon>Acinetobacter</taxon>
        <taxon>Acinetobacter calcoaceticus/baumannii complex</taxon>
    </lineage>
</organism>
<evidence type="ECO:0000255" key="1">
    <source>
        <dbReference type="HAMAP-Rule" id="MF_00530"/>
    </source>
</evidence>
<dbReference type="EMBL" id="CP001182">
    <property type="protein sequence ID" value="ACJ39625.1"/>
    <property type="molecule type" value="Genomic_DNA"/>
</dbReference>
<dbReference type="RefSeq" id="WP_000224542.1">
    <property type="nucleotide sequence ID" value="NC_011586.2"/>
</dbReference>
<dbReference type="SMR" id="B7I1W5"/>
<dbReference type="KEGG" id="abn:AB57_0194"/>
<dbReference type="HOGENOM" id="CLU_084338_2_0_6"/>
<dbReference type="Proteomes" id="UP000007094">
    <property type="component" value="Chromosome"/>
</dbReference>
<dbReference type="GO" id="GO:0005886">
    <property type="term" value="C:plasma membrane"/>
    <property type="evidence" value="ECO:0007669"/>
    <property type="project" value="UniProtKB-SubCell"/>
</dbReference>
<dbReference type="GO" id="GO:0045259">
    <property type="term" value="C:proton-transporting ATP synthase complex"/>
    <property type="evidence" value="ECO:0007669"/>
    <property type="project" value="UniProtKB-KW"/>
</dbReference>
<dbReference type="GO" id="GO:0005524">
    <property type="term" value="F:ATP binding"/>
    <property type="evidence" value="ECO:0007669"/>
    <property type="project" value="UniProtKB-UniRule"/>
</dbReference>
<dbReference type="GO" id="GO:0046933">
    <property type="term" value="F:proton-transporting ATP synthase activity, rotational mechanism"/>
    <property type="evidence" value="ECO:0007669"/>
    <property type="project" value="UniProtKB-UniRule"/>
</dbReference>
<dbReference type="CDD" id="cd12152">
    <property type="entry name" value="F1-ATPase_delta"/>
    <property type="match status" value="1"/>
</dbReference>
<dbReference type="FunFam" id="2.60.15.10:FF:000001">
    <property type="entry name" value="ATP synthase epsilon chain"/>
    <property type="match status" value="1"/>
</dbReference>
<dbReference type="Gene3D" id="1.20.5.440">
    <property type="entry name" value="ATP synthase delta/epsilon subunit, C-terminal domain"/>
    <property type="match status" value="1"/>
</dbReference>
<dbReference type="Gene3D" id="2.60.15.10">
    <property type="entry name" value="F0F1 ATP synthase delta/epsilon subunit, N-terminal"/>
    <property type="match status" value="1"/>
</dbReference>
<dbReference type="HAMAP" id="MF_00530">
    <property type="entry name" value="ATP_synth_epsil_bac"/>
    <property type="match status" value="1"/>
</dbReference>
<dbReference type="InterPro" id="IPR036794">
    <property type="entry name" value="ATP_F1_dsu/esu_C_sf"/>
</dbReference>
<dbReference type="InterPro" id="IPR001469">
    <property type="entry name" value="ATP_synth_F1_dsu/esu"/>
</dbReference>
<dbReference type="InterPro" id="IPR020546">
    <property type="entry name" value="ATP_synth_F1_dsu/esu_N"/>
</dbReference>
<dbReference type="InterPro" id="IPR036771">
    <property type="entry name" value="ATPsynth_dsu/esu_N"/>
</dbReference>
<dbReference type="NCBIfam" id="TIGR01216">
    <property type="entry name" value="ATP_synt_epsi"/>
    <property type="match status" value="1"/>
</dbReference>
<dbReference type="NCBIfam" id="NF001847">
    <property type="entry name" value="PRK00571.1-4"/>
    <property type="match status" value="1"/>
</dbReference>
<dbReference type="PANTHER" id="PTHR13822">
    <property type="entry name" value="ATP SYNTHASE DELTA/EPSILON CHAIN"/>
    <property type="match status" value="1"/>
</dbReference>
<dbReference type="PANTHER" id="PTHR13822:SF10">
    <property type="entry name" value="ATP SYNTHASE EPSILON CHAIN, CHLOROPLASTIC"/>
    <property type="match status" value="1"/>
</dbReference>
<dbReference type="Pfam" id="PF02823">
    <property type="entry name" value="ATP-synt_DE_N"/>
    <property type="match status" value="1"/>
</dbReference>
<dbReference type="SUPFAM" id="SSF46604">
    <property type="entry name" value="Epsilon subunit of F1F0-ATP synthase C-terminal domain"/>
    <property type="match status" value="1"/>
</dbReference>
<dbReference type="SUPFAM" id="SSF51344">
    <property type="entry name" value="Epsilon subunit of F1F0-ATP synthase N-terminal domain"/>
    <property type="match status" value="1"/>
</dbReference>
<proteinExistence type="inferred from homology"/>
<feature type="chain" id="PRO_1000127814" description="ATP synthase epsilon chain">
    <location>
        <begin position="1"/>
        <end position="139"/>
    </location>
</feature>
<comment type="function">
    <text evidence="1">Produces ATP from ADP in the presence of a proton gradient across the membrane.</text>
</comment>
<comment type="subunit">
    <text evidence="1">F-type ATPases have 2 components, CF(1) - the catalytic core - and CF(0) - the membrane proton channel. CF(1) has five subunits: alpha(3), beta(3), gamma(1), delta(1), epsilon(1). CF(0) has three main subunits: a, b and c.</text>
</comment>
<comment type="subcellular location">
    <subcellularLocation>
        <location evidence="1">Cell inner membrane</location>
        <topology evidence="1">Peripheral membrane protein</topology>
    </subcellularLocation>
</comment>
<comment type="similarity">
    <text evidence="1">Belongs to the ATPase epsilon chain family.</text>
</comment>
<gene>
    <name evidence="1" type="primary">atpC</name>
    <name type="ordered locus">AB57_0194</name>
</gene>